<comment type="function">
    <text evidence="1">Could be involved in insertion of integral membrane proteins into the membrane.</text>
</comment>
<comment type="subcellular location">
    <subcellularLocation>
        <location evidence="1">Cell inner membrane</location>
        <topology evidence="1">Peripheral membrane protein</topology>
        <orientation evidence="1">Cytoplasmic side</orientation>
    </subcellularLocation>
</comment>
<comment type="similarity">
    <text evidence="1">Belongs to the UPF0161 family.</text>
</comment>
<evidence type="ECO:0000255" key="1">
    <source>
        <dbReference type="HAMAP-Rule" id="MF_00386"/>
    </source>
</evidence>
<organism>
    <name type="scientific">Prochlorococcus marinus (strain MIT 9303)</name>
    <dbReference type="NCBI Taxonomy" id="59922"/>
    <lineage>
        <taxon>Bacteria</taxon>
        <taxon>Bacillati</taxon>
        <taxon>Cyanobacteriota</taxon>
        <taxon>Cyanophyceae</taxon>
        <taxon>Synechococcales</taxon>
        <taxon>Prochlorococcaceae</taxon>
        <taxon>Prochlorococcus</taxon>
    </lineage>
</organism>
<keyword id="KW-0997">Cell inner membrane</keyword>
<keyword id="KW-1003">Cell membrane</keyword>
<keyword id="KW-0472">Membrane</keyword>
<name>YIDD_PROM3</name>
<accession>A2CBJ0</accession>
<proteinExistence type="inferred from homology"/>
<protein>
    <recommendedName>
        <fullName evidence="1">Putative membrane protein insertion efficiency factor</fullName>
    </recommendedName>
</protein>
<dbReference type="EMBL" id="CP000554">
    <property type="protein sequence ID" value="ABM78850.1"/>
    <property type="molecule type" value="Genomic_DNA"/>
</dbReference>
<dbReference type="RefSeq" id="WP_011129607.1">
    <property type="nucleotide sequence ID" value="NC_008820.1"/>
</dbReference>
<dbReference type="STRING" id="59922.P9303_21151"/>
<dbReference type="KEGG" id="pmf:P9303_21151"/>
<dbReference type="HOGENOM" id="CLU_144811_6_1_3"/>
<dbReference type="BioCyc" id="PMAR59922:G1G80-1847-MONOMER"/>
<dbReference type="Proteomes" id="UP000002274">
    <property type="component" value="Chromosome"/>
</dbReference>
<dbReference type="GO" id="GO:0005886">
    <property type="term" value="C:plasma membrane"/>
    <property type="evidence" value="ECO:0007669"/>
    <property type="project" value="UniProtKB-SubCell"/>
</dbReference>
<dbReference type="HAMAP" id="MF_00386">
    <property type="entry name" value="UPF0161_YidD"/>
    <property type="match status" value="1"/>
</dbReference>
<dbReference type="InterPro" id="IPR002696">
    <property type="entry name" value="Membr_insert_effic_factor_YidD"/>
</dbReference>
<dbReference type="NCBIfam" id="TIGR00278">
    <property type="entry name" value="membrane protein insertion efficiency factor YidD"/>
    <property type="match status" value="1"/>
</dbReference>
<dbReference type="PANTHER" id="PTHR33383">
    <property type="entry name" value="MEMBRANE PROTEIN INSERTION EFFICIENCY FACTOR-RELATED"/>
    <property type="match status" value="1"/>
</dbReference>
<dbReference type="PANTHER" id="PTHR33383:SF1">
    <property type="entry name" value="MEMBRANE PROTEIN INSERTION EFFICIENCY FACTOR-RELATED"/>
    <property type="match status" value="1"/>
</dbReference>
<dbReference type="Pfam" id="PF01809">
    <property type="entry name" value="YidD"/>
    <property type="match status" value="1"/>
</dbReference>
<dbReference type="SMART" id="SM01234">
    <property type="entry name" value="Haemolytic"/>
    <property type="match status" value="1"/>
</dbReference>
<reference key="1">
    <citation type="journal article" date="2007" name="PLoS Genet.">
        <title>Patterns and implications of gene gain and loss in the evolution of Prochlorococcus.</title>
        <authorList>
            <person name="Kettler G.C."/>
            <person name="Martiny A.C."/>
            <person name="Huang K."/>
            <person name="Zucker J."/>
            <person name="Coleman M.L."/>
            <person name="Rodrigue S."/>
            <person name="Chen F."/>
            <person name="Lapidus A."/>
            <person name="Ferriera S."/>
            <person name="Johnson J."/>
            <person name="Steglich C."/>
            <person name="Church G.M."/>
            <person name="Richardson P."/>
            <person name="Chisholm S.W."/>
        </authorList>
    </citation>
    <scope>NUCLEOTIDE SEQUENCE [LARGE SCALE GENOMIC DNA]</scope>
    <source>
        <strain>MIT 9303</strain>
    </source>
</reference>
<gene>
    <name type="ordered locus">P9303_21151</name>
</gene>
<feature type="chain" id="PRO_1000013111" description="Putative membrane protein insertion efficiency factor">
    <location>
        <begin position="1"/>
        <end position="88"/>
    </location>
</feature>
<sequence>MRESNTLSGGIFALLNRAIGSVLLALIGFYRTWLSPLLGPHCRFIPSCSAYGLEAIQRHGPWRGGWLTLRRLSRCHPFTPCGCDPVPD</sequence>